<protein>
    <recommendedName>
        <fullName>Innexin-7</fullName>
    </recommendedName>
    <alternativeName>
        <fullName>Protein opu-7</fullName>
    </alternativeName>
</protein>
<comment type="function">
    <text evidence="2">Structural component of the gap junctions.</text>
</comment>
<comment type="subcellular location">
    <subcellularLocation>
        <location evidence="6">Cell membrane</location>
        <topology evidence="3">Multi-pass membrane protein</topology>
    </subcellularLocation>
    <subcellularLocation>
        <location evidence="1">Cell junction</location>
        <location evidence="1">Gap junction</location>
    </subcellularLocation>
</comment>
<comment type="similarity">
    <text evidence="3">Belongs to the pannexin family.</text>
</comment>
<accession>Q21123</accession>
<evidence type="ECO:0000250" key="1"/>
<evidence type="ECO:0000250" key="2">
    <source>
        <dbReference type="UniProtKB" id="O61715"/>
    </source>
</evidence>
<evidence type="ECO:0000255" key="3">
    <source>
        <dbReference type="PROSITE-ProRule" id="PRU00351"/>
    </source>
</evidence>
<evidence type="ECO:0000256" key="4">
    <source>
        <dbReference type="SAM" id="MobiDB-lite"/>
    </source>
</evidence>
<evidence type="ECO:0000269" key="5">
    <source>
    </source>
</evidence>
<evidence type="ECO:0000305" key="6"/>
<name>INX7_CAEEL</name>
<dbReference type="EMBL" id="FO080181">
    <property type="protein sequence ID" value="CCD61803.1"/>
    <property type="molecule type" value="Genomic_DNA"/>
</dbReference>
<dbReference type="PIR" id="D88700">
    <property type="entry name" value="D88700"/>
</dbReference>
<dbReference type="RefSeq" id="NP_500894.1">
    <property type="nucleotide sequence ID" value="NM_068493.8"/>
</dbReference>
<dbReference type="BioGRID" id="42486">
    <property type="interactions" value="1"/>
</dbReference>
<dbReference type="FunCoup" id="Q21123">
    <property type="interactions" value="265"/>
</dbReference>
<dbReference type="STRING" id="6239.K02B2.4a.1"/>
<dbReference type="GlyCosmos" id="Q21123">
    <property type="glycosylation" value="1 site, No reported glycans"/>
</dbReference>
<dbReference type="iPTMnet" id="Q21123"/>
<dbReference type="PaxDb" id="6239-K02B2.4"/>
<dbReference type="EnsemblMetazoa" id="K02B2.4a.1">
    <property type="protein sequence ID" value="K02B2.4a.1"/>
    <property type="gene ID" value="WBGene00002129"/>
</dbReference>
<dbReference type="GeneID" id="177364"/>
<dbReference type="KEGG" id="cel:CELE_K02B2.4"/>
<dbReference type="UCSC" id="K02B2.4">
    <property type="organism name" value="c. elegans"/>
</dbReference>
<dbReference type="AGR" id="WB:WBGene00002129"/>
<dbReference type="CTD" id="177364"/>
<dbReference type="WormBase" id="K02B2.4a">
    <property type="protein sequence ID" value="CE04690"/>
    <property type="gene ID" value="WBGene00002129"/>
    <property type="gene designation" value="inx-7"/>
</dbReference>
<dbReference type="eggNOG" id="ENOG502RRNR">
    <property type="taxonomic scope" value="Eukaryota"/>
</dbReference>
<dbReference type="HOGENOM" id="CLU_035763_0_2_1"/>
<dbReference type="InParanoid" id="Q21123"/>
<dbReference type="OMA" id="PHKICRF"/>
<dbReference type="OrthoDB" id="5867527at2759"/>
<dbReference type="PhylomeDB" id="Q21123"/>
<dbReference type="PRO" id="PR:Q21123"/>
<dbReference type="Proteomes" id="UP000001940">
    <property type="component" value="Chromosome IV"/>
</dbReference>
<dbReference type="Bgee" id="WBGene00002129">
    <property type="expression patterns" value="Expressed in germ line (C elegans) and 4 other cell types or tissues"/>
</dbReference>
<dbReference type="ExpressionAtlas" id="Q21123">
    <property type="expression patterns" value="baseline and differential"/>
</dbReference>
<dbReference type="GO" id="GO:0005921">
    <property type="term" value="C:gap junction"/>
    <property type="evidence" value="ECO:0000250"/>
    <property type="project" value="UniProtKB"/>
</dbReference>
<dbReference type="GO" id="GO:0005886">
    <property type="term" value="C:plasma membrane"/>
    <property type="evidence" value="ECO:0000250"/>
    <property type="project" value="UniProtKB"/>
</dbReference>
<dbReference type="GO" id="GO:0005243">
    <property type="term" value="F:gap junction channel activity"/>
    <property type="evidence" value="ECO:0000250"/>
    <property type="project" value="UniProtKB"/>
</dbReference>
<dbReference type="GO" id="GO:0055077">
    <property type="term" value="F:gap junction hemi-channel activity"/>
    <property type="evidence" value="ECO:0000250"/>
    <property type="project" value="UniProtKB"/>
</dbReference>
<dbReference type="GO" id="GO:0034220">
    <property type="term" value="P:monoatomic ion transmembrane transport"/>
    <property type="evidence" value="ECO:0007669"/>
    <property type="project" value="UniProtKB-KW"/>
</dbReference>
<dbReference type="InterPro" id="IPR000990">
    <property type="entry name" value="Innexin"/>
</dbReference>
<dbReference type="PANTHER" id="PTHR11893">
    <property type="entry name" value="INNEXIN"/>
    <property type="match status" value="1"/>
</dbReference>
<dbReference type="PANTHER" id="PTHR11893:SF9">
    <property type="entry name" value="INNEXIN-7"/>
    <property type="match status" value="1"/>
</dbReference>
<dbReference type="Pfam" id="PF00876">
    <property type="entry name" value="Innexin"/>
    <property type="match status" value="1"/>
</dbReference>
<dbReference type="PRINTS" id="PR01262">
    <property type="entry name" value="INNEXIN"/>
</dbReference>
<dbReference type="PROSITE" id="PS51013">
    <property type="entry name" value="PANNEXIN"/>
    <property type="match status" value="1"/>
</dbReference>
<reference key="1">
    <citation type="journal article" date="1998" name="Science">
        <title>Genome sequence of the nematode C. elegans: a platform for investigating biology.</title>
        <authorList>
            <consortium name="The C. elegans sequencing consortium"/>
        </authorList>
    </citation>
    <scope>NUCLEOTIDE SEQUENCE [LARGE SCALE GENOMIC DNA]</scope>
    <source>
        <strain>Bristol N2</strain>
    </source>
</reference>
<reference key="2">
    <citation type="journal article" date="2007" name="Mol. Cell. Proteomics">
        <title>Proteomics reveals N-linked glycoprotein diversity in Caenorhabditis elegans and suggests an atypical translocation mechanism for integral membrane proteins.</title>
        <authorList>
            <person name="Kaji H."/>
            <person name="Kamiie J."/>
            <person name="Kawakami H."/>
            <person name="Kido K."/>
            <person name="Yamauchi Y."/>
            <person name="Shinkawa T."/>
            <person name="Taoka M."/>
            <person name="Takahashi N."/>
            <person name="Isobe T."/>
        </authorList>
    </citation>
    <scope>GLYCOSYLATION [LARGE SCALE ANALYSIS] AT ASN-267</scope>
    <scope>IDENTIFICATION BY MASS SPECTROMETRY</scope>
    <source>
        <strain>Bristol N2</strain>
    </source>
</reference>
<gene>
    <name type="primary">inx-7</name>
    <name type="synonym">opu-7</name>
    <name type="ORF">K02B2.4</name>
</gene>
<feature type="chain" id="PRO_0000208509" description="Innexin-7">
    <location>
        <begin position="1"/>
        <end position="556"/>
    </location>
</feature>
<feature type="transmembrane region" description="Helical" evidence="3">
    <location>
        <begin position="21"/>
        <end position="41"/>
    </location>
</feature>
<feature type="transmembrane region" description="Helical" evidence="3">
    <location>
        <begin position="127"/>
        <end position="147"/>
    </location>
</feature>
<feature type="transmembrane region" description="Helical" evidence="3">
    <location>
        <begin position="213"/>
        <end position="233"/>
    </location>
</feature>
<feature type="transmembrane region" description="Helical" evidence="3">
    <location>
        <begin position="310"/>
        <end position="330"/>
    </location>
</feature>
<feature type="region of interest" description="Disordered" evidence="4">
    <location>
        <begin position="431"/>
        <end position="556"/>
    </location>
</feature>
<feature type="compositionally biased region" description="Polar residues" evidence="4">
    <location>
        <begin position="435"/>
        <end position="447"/>
    </location>
</feature>
<feature type="compositionally biased region" description="Basic and acidic residues" evidence="4">
    <location>
        <begin position="452"/>
        <end position="461"/>
    </location>
</feature>
<feature type="compositionally biased region" description="Polar residues" evidence="4">
    <location>
        <begin position="463"/>
        <end position="474"/>
    </location>
</feature>
<feature type="compositionally biased region" description="Basic residues" evidence="4">
    <location>
        <begin position="500"/>
        <end position="513"/>
    </location>
</feature>
<feature type="compositionally biased region" description="Low complexity" evidence="4">
    <location>
        <begin position="514"/>
        <end position="527"/>
    </location>
</feature>
<feature type="compositionally biased region" description="Basic and acidic residues" evidence="4">
    <location>
        <begin position="539"/>
        <end position="556"/>
    </location>
</feature>
<feature type="glycosylation site" description="N-linked (GlcNAc...) asparagine" evidence="5">
    <location>
        <position position="267"/>
    </location>
</feature>
<proteinExistence type="evidence at protein level"/>
<keyword id="KW-0965">Cell junction</keyword>
<keyword id="KW-1003">Cell membrane</keyword>
<keyword id="KW-0303">Gap junction</keyword>
<keyword id="KW-0325">Glycoprotein</keyword>
<keyword id="KW-0407">Ion channel</keyword>
<keyword id="KW-0406">Ion transport</keyword>
<keyword id="KW-0472">Membrane</keyword>
<keyword id="KW-1185">Reference proteome</keyword>
<keyword id="KW-0812">Transmembrane</keyword>
<keyword id="KW-1133">Transmembrane helix</keyword>
<keyword id="KW-0813">Transport</keyword>
<sequence>MFVFRVLNTVPYTNRTGAKDLVASIHSFLTSNLLVGLAVLISWKQFGGTPIECMVPLDFTSAWVQYSNNYCWAQPTYFIPFTEELVEQVVDPADVVADGITIGNGGNRPRFVKKGGEKISYYQWMSFFLLFEAACFRLPCFIWKYFASQSGMQVGEILRVASDENNAVPLVKKANIDALCIHLRGVLRFQKRLKLKKIVPHKILRFLNIKYSAYYVTFIYFVAKVAFLLNVILQSKLLNKYMLPHDRQQNFGFDMWKTIFYGSTNGNETWRENGVFPRVTLCDFETRDMGNVQMHTVQCVLLLNLFTEKIFVFLWAWYILLTAFTVGNLFSWLFAVFNETYNEHFILNHLEMCETPFDKDDLKNREHVTRFITLYLGTDGLFLLQLIAQHADVVFTTELIAALFKTYIEIEAQRATLKQMNAVLPLLRPNDESQVESGKNTAPSTSHNVRRRGTEQLEKNVKSRQGSLSTQLRPFNSFEEPDQPTKKFDDSSSEDENSKKGSKKPSPTKKKASSKNSPQSSSNSRRPSLAHTASPAFTHHHEPDSKIPKTAEKKHW</sequence>
<organism>
    <name type="scientific">Caenorhabditis elegans</name>
    <dbReference type="NCBI Taxonomy" id="6239"/>
    <lineage>
        <taxon>Eukaryota</taxon>
        <taxon>Metazoa</taxon>
        <taxon>Ecdysozoa</taxon>
        <taxon>Nematoda</taxon>
        <taxon>Chromadorea</taxon>
        <taxon>Rhabditida</taxon>
        <taxon>Rhabditina</taxon>
        <taxon>Rhabditomorpha</taxon>
        <taxon>Rhabditoidea</taxon>
        <taxon>Rhabditidae</taxon>
        <taxon>Peloderinae</taxon>
        <taxon>Caenorhabditis</taxon>
    </lineage>
</organism>